<protein>
    <recommendedName>
        <fullName>Cytochrome b</fullName>
    </recommendedName>
    <alternativeName>
        <fullName>Complex III subunit 3</fullName>
    </alternativeName>
    <alternativeName>
        <fullName>Complex III subunit III</fullName>
    </alternativeName>
    <alternativeName>
        <fullName>Cytochrome b-c1 complex subunit 3</fullName>
    </alternativeName>
    <alternativeName>
        <fullName>Ubiquinol-cytochrome-c reductase complex cytochrome b subunit</fullName>
    </alternativeName>
</protein>
<comment type="function">
    <text evidence="2">Component of the ubiquinol-cytochrome c reductase complex (complex III or cytochrome b-c1 complex) that is part of the mitochondrial respiratory chain. The b-c1 complex mediates electron transfer from ubiquinol to cytochrome c. Contributes to the generation of a proton gradient across the mitochondrial membrane that is then used for ATP synthesis.</text>
</comment>
<comment type="cofactor">
    <cofactor evidence="2">
        <name>heme b</name>
        <dbReference type="ChEBI" id="CHEBI:60344"/>
    </cofactor>
    <text evidence="2">Binds 2 heme b groups non-covalently.</text>
</comment>
<comment type="subunit">
    <text evidence="2">The cytochrome bc1 complex contains 11 subunits: 3 respiratory subunits (MT-CYB, CYC1 and UQCRFS1), 2 core proteins (UQCRC1 and UQCRC2) and 6 low-molecular weight proteins (UQCRH/QCR6, UQCRB/QCR7, UQCRQ/QCR8, UQCR10/QCR9, UQCR11/QCR10 and a cleavage product of UQCRFS1). This cytochrome bc1 complex then forms a dimer.</text>
</comment>
<comment type="subcellular location">
    <subcellularLocation>
        <location evidence="2">Mitochondrion inner membrane</location>
        <topology evidence="2">Multi-pass membrane protein</topology>
    </subcellularLocation>
</comment>
<comment type="miscellaneous">
    <text evidence="1">Heme 1 (or BL or b562) is low-potential and absorbs at about 562 nm, and heme 2 (or BH or b566) is high-potential and absorbs at about 566 nm.</text>
</comment>
<comment type="similarity">
    <text evidence="3 4">Belongs to the cytochrome b family.</text>
</comment>
<comment type="caution">
    <text evidence="2">The full-length protein contains only eight transmembrane helices, not nine as predicted by bioinformatics tools.</text>
</comment>
<reference key="1">
    <citation type="submission" date="1997-06" db="EMBL/GenBank/DDBJ databases">
        <title>Cytochrome b phylogeny of North American hares and jackrabbits (Lepus, Lagomorpha) and the effects of mutational saturation in outgroup taxa.</title>
        <authorList>
            <person name="Halanych K.M."/>
            <person name="Demboski J.R."/>
            <person name="van Vuuren B.J."/>
            <person name="Klein D.R."/>
            <person name="Cook J.A."/>
        </authorList>
    </citation>
    <scope>NUCLEOTIDE SEQUENCE [GENOMIC DNA]</scope>
    <source>
        <strain>Isolate UAM 10870</strain>
    </source>
</reference>
<geneLocation type="mitochondrion"/>
<dbReference type="EMBL" id="AF010154">
    <property type="protein sequence ID" value="AAB94494.1"/>
    <property type="molecule type" value="Genomic_DNA"/>
</dbReference>
<dbReference type="SMR" id="O47556"/>
<dbReference type="GO" id="GO:0005743">
    <property type="term" value="C:mitochondrial inner membrane"/>
    <property type="evidence" value="ECO:0007669"/>
    <property type="project" value="UniProtKB-SubCell"/>
</dbReference>
<dbReference type="GO" id="GO:0046872">
    <property type="term" value="F:metal ion binding"/>
    <property type="evidence" value="ECO:0007669"/>
    <property type="project" value="UniProtKB-KW"/>
</dbReference>
<dbReference type="GO" id="GO:0008121">
    <property type="term" value="F:ubiquinol-cytochrome-c reductase activity"/>
    <property type="evidence" value="ECO:0007669"/>
    <property type="project" value="TreeGrafter"/>
</dbReference>
<dbReference type="GO" id="GO:0006122">
    <property type="term" value="P:mitochondrial electron transport, ubiquinol to cytochrome c"/>
    <property type="evidence" value="ECO:0007669"/>
    <property type="project" value="TreeGrafter"/>
</dbReference>
<dbReference type="CDD" id="cd00284">
    <property type="entry name" value="Cytochrome_b_N"/>
    <property type="match status" value="1"/>
</dbReference>
<dbReference type="Gene3D" id="1.20.810.10">
    <property type="entry name" value="Cytochrome Bc1 Complex, Chain C"/>
    <property type="match status" value="1"/>
</dbReference>
<dbReference type="InterPro" id="IPR005798">
    <property type="entry name" value="Cyt_b/b6_C"/>
</dbReference>
<dbReference type="InterPro" id="IPR005797">
    <property type="entry name" value="Cyt_b/b6_N"/>
</dbReference>
<dbReference type="InterPro" id="IPR027387">
    <property type="entry name" value="Cytb/b6-like_sf"/>
</dbReference>
<dbReference type="InterPro" id="IPR048259">
    <property type="entry name" value="Cytochrome_b_N_euk/bac"/>
</dbReference>
<dbReference type="InterPro" id="IPR016174">
    <property type="entry name" value="Di-haem_cyt_TM"/>
</dbReference>
<dbReference type="PANTHER" id="PTHR19271">
    <property type="entry name" value="CYTOCHROME B"/>
    <property type="match status" value="1"/>
</dbReference>
<dbReference type="PANTHER" id="PTHR19271:SF16">
    <property type="entry name" value="CYTOCHROME B"/>
    <property type="match status" value="1"/>
</dbReference>
<dbReference type="Pfam" id="PF00033">
    <property type="entry name" value="Cytochrome_B"/>
    <property type="match status" value="1"/>
</dbReference>
<dbReference type="PIRSF" id="PIRSF000032">
    <property type="entry name" value="Cytochrome_b6"/>
    <property type="match status" value="1"/>
</dbReference>
<dbReference type="SUPFAM" id="SSF81342">
    <property type="entry name" value="Transmembrane di-heme cytochromes"/>
    <property type="match status" value="1"/>
</dbReference>
<dbReference type="PROSITE" id="PS51003">
    <property type="entry name" value="CYTB_CTER"/>
    <property type="match status" value="1"/>
</dbReference>
<dbReference type="PROSITE" id="PS51002">
    <property type="entry name" value="CYTB_NTER"/>
    <property type="match status" value="1"/>
</dbReference>
<keyword id="KW-0249">Electron transport</keyword>
<keyword id="KW-0349">Heme</keyword>
<keyword id="KW-0408">Iron</keyword>
<keyword id="KW-0472">Membrane</keyword>
<keyword id="KW-0479">Metal-binding</keyword>
<keyword id="KW-0496">Mitochondrion</keyword>
<keyword id="KW-0999">Mitochondrion inner membrane</keyword>
<keyword id="KW-0679">Respiratory chain</keyword>
<keyword id="KW-0812">Transmembrane</keyword>
<keyword id="KW-1133">Transmembrane helix</keyword>
<keyword id="KW-0813">Transport</keyword>
<keyword id="KW-0830">Ubiquinone</keyword>
<organism>
    <name type="scientific">Lepus othus</name>
    <name type="common">Alaskan hare</name>
    <dbReference type="NCBI Taxonomy" id="62620"/>
    <lineage>
        <taxon>Eukaryota</taxon>
        <taxon>Metazoa</taxon>
        <taxon>Chordata</taxon>
        <taxon>Craniata</taxon>
        <taxon>Vertebrata</taxon>
        <taxon>Euteleostomi</taxon>
        <taxon>Mammalia</taxon>
        <taxon>Eutheria</taxon>
        <taxon>Euarchontoglires</taxon>
        <taxon>Glires</taxon>
        <taxon>Lagomorpha</taxon>
        <taxon>Leporidae</taxon>
        <taxon>Lepus</taxon>
    </lineage>
</organism>
<evidence type="ECO:0000250" key="1"/>
<evidence type="ECO:0000250" key="2">
    <source>
        <dbReference type="UniProtKB" id="P00157"/>
    </source>
</evidence>
<evidence type="ECO:0000255" key="3">
    <source>
        <dbReference type="PROSITE-ProRule" id="PRU00967"/>
    </source>
</evidence>
<evidence type="ECO:0000255" key="4">
    <source>
        <dbReference type="PROSITE-ProRule" id="PRU00968"/>
    </source>
</evidence>
<name>CYB_LEPOT</name>
<proteinExistence type="inferred from homology"/>
<accession>O47556</accession>
<feature type="chain" id="PRO_0000061108" description="Cytochrome b">
    <location>
        <begin position="1"/>
        <end position="234" status="greater than"/>
    </location>
</feature>
<feature type="transmembrane region" description="Helical" evidence="2">
    <location>
        <begin position="33"/>
        <end position="53"/>
    </location>
</feature>
<feature type="transmembrane region" description="Helical" evidence="2">
    <location>
        <begin position="77"/>
        <end position="98"/>
    </location>
</feature>
<feature type="transmembrane region" description="Helical" evidence="2">
    <location>
        <begin position="113"/>
        <end position="133"/>
    </location>
</feature>
<feature type="transmembrane region" description="Helical" evidence="2">
    <location>
        <begin position="178"/>
        <end position="198"/>
    </location>
</feature>
<feature type="transmembrane region" description="Helical" evidence="2">
    <location>
        <begin position="226"/>
        <end position="234" status="greater than"/>
    </location>
</feature>
<feature type="binding site" description="axial binding residue" evidence="2">
    <location>
        <position position="83"/>
    </location>
    <ligand>
        <name>heme b</name>
        <dbReference type="ChEBI" id="CHEBI:60344"/>
        <label>b562</label>
    </ligand>
    <ligandPart>
        <name>Fe</name>
        <dbReference type="ChEBI" id="CHEBI:18248"/>
    </ligandPart>
</feature>
<feature type="binding site" description="axial binding residue" evidence="2">
    <location>
        <position position="97"/>
    </location>
    <ligand>
        <name>heme b</name>
        <dbReference type="ChEBI" id="CHEBI:60344"/>
        <label>b566</label>
    </ligand>
    <ligandPart>
        <name>Fe</name>
        <dbReference type="ChEBI" id="CHEBI:18248"/>
    </ligandPart>
</feature>
<feature type="binding site" description="axial binding residue" evidence="2">
    <location>
        <position position="182"/>
    </location>
    <ligand>
        <name>heme b</name>
        <dbReference type="ChEBI" id="CHEBI:60344"/>
        <label>b562</label>
    </ligand>
    <ligandPart>
        <name>Fe</name>
        <dbReference type="ChEBI" id="CHEBI:18248"/>
    </ligandPart>
</feature>
<feature type="binding site" description="axial binding residue" evidence="2">
    <location>
        <position position="196"/>
    </location>
    <ligand>
        <name>heme b</name>
        <dbReference type="ChEBI" id="CHEBI:60344"/>
        <label>b566</label>
    </ligand>
    <ligandPart>
        <name>Fe</name>
        <dbReference type="ChEBI" id="CHEBI:18248"/>
    </ligandPart>
</feature>
<feature type="binding site" evidence="2">
    <location>
        <position position="201"/>
    </location>
    <ligand>
        <name>a ubiquinone</name>
        <dbReference type="ChEBI" id="CHEBI:16389"/>
    </ligand>
</feature>
<feature type="non-terminal residue">
    <location>
        <position position="234"/>
    </location>
</feature>
<gene>
    <name type="primary">MT-CYB</name>
    <name type="synonym">COB</name>
    <name type="synonym">CYTB</name>
    <name type="synonym">MTCYB</name>
</gene>
<sequence length="234" mass="26391">MTNIRKTHPLLKIVNHSLIDLPAPSNISAWWNFGSLLGLCLMIQILTGLFLAMHYTSDTATAFSSVTHICRDVNYGWLIRYLHANGASMFFICLYMHVGRGIYYGSYTYLETWNIGIILLFAVMATAFMGYVLPWGQMSFWGATVITNLLSAIPYIGTTLVEWIWGGFSVDKATLTRFFAFHFILPFIIAALVMIHLLFLHETGSNNPSGIPSDSDKIPFHPYYTIKDLLGFLV</sequence>